<reference key="1">
    <citation type="submission" date="2005-09" db="EMBL/GenBank/DDBJ databases">
        <title>Annotation of the Aspergillus terreus NIH2624 genome.</title>
        <authorList>
            <person name="Birren B.W."/>
            <person name="Lander E.S."/>
            <person name="Galagan J.E."/>
            <person name="Nusbaum C."/>
            <person name="Devon K."/>
            <person name="Henn M."/>
            <person name="Ma L.-J."/>
            <person name="Jaffe D.B."/>
            <person name="Butler J."/>
            <person name="Alvarez P."/>
            <person name="Gnerre S."/>
            <person name="Grabherr M."/>
            <person name="Kleber M."/>
            <person name="Mauceli E.W."/>
            <person name="Brockman W."/>
            <person name="Rounsley S."/>
            <person name="Young S.K."/>
            <person name="LaButti K."/>
            <person name="Pushparaj V."/>
            <person name="DeCaprio D."/>
            <person name="Crawford M."/>
            <person name="Koehrsen M."/>
            <person name="Engels R."/>
            <person name="Montgomery P."/>
            <person name="Pearson M."/>
            <person name="Howarth C."/>
            <person name="Larson L."/>
            <person name="Luoma S."/>
            <person name="White J."/>
            <person name="Alvarado L."/>
            <person name="Kodira C.D."/>
            <person name="Zeng Q."/>
            <person name="Oleary S."/>
            <person name="Yandava C."/>
            <person name="Denning D.W."/>
            <person name="Nierman W.C."/>
            <person name="Milne T."/>
            <person name="Madden K."/>
        </authorList>
    </citation>
    <scope>NUCLEOTIDE SEQUENCE [LARGE SCALE GENOMIC DNA]</scope>
    <source>
        <strain>NIH 2624 / FGSC A1156</strain>
    </source>
</reference>
<reference key="2">
    <citation type="journal article" date="2004" name="Cell. Mol. Life Sci.">
        <title>Terrein: a new melanogenesis inhibitor and its mechanism.</title>
        <authorList>
            <person name="Park S.H."/>
            <person name="Kim D.S."/>
            <person name="Kim W.G."/>
            <person name="Ryoo I.J."/>
            <person name="Lee D.H."/>
            <person name="Huh C.H."/>
            <person name="Youn S.W."/>
            <person name="Yoo I.D."/>
            <person name="Park K.C."/>
        </authorList>
    </citation>
    <scope>BIOTECHNOLOGY</scope>
</reference>
<reference key="3">
    <citation type="journal article" date="2005" name="Bioorg. Med. Chem. Lett.">
        <title>Synthesis and melanin biosynthesis inhibitory activity of (+/-)-terrein produced by Penicillium sp. 20135.</title>
        <authorList>
            <person name="Lee S."/>
            <person name="Kim W.G."/>
            <person name="Kim E."/>
            <person name="Ryoo I.J."/>
            <person name="Lee H.K."/>
            <person name="Kim J.N."/>
            <person name="Jung S.H."/>
            <person name="Yoo I.D."/>
        </authorList>
    </citation>
    <scope>BIOTECHNOLOGY</scope>
</reference>
<reference key="4">
    <citation type="journal article" date="2008" name="J. Antibiot.">
        <title>A new terrein glucoside, a novel inhibitor of angiogenin secretion in tumor angiogenesis.</title>
        <authorList>
            <person name="Arakawa M."/>
            <person name="Someno T."/>
            <person name="Kawada M."/>
            <person name="Ikeda D."/>
        </authorList>
    </citation>
    <scope>BIOTECHNOLOGY</scope>
</reference>
<reference key="5">
    <citation type="journal article" date="2008" name="J. Endod.">
        <title>Terrein reduces pulpal inflammation in human dental pulp cells.</title>
        <authorList>
            <person name="Lee J.C."/>
            <person name="Yu M.K."/>
            <person name="Lee R."/>
            <person name="Lee Y.H."/>
            <person name="Jeon J.G."/>
            <person name="Lee M.H."/>
            <person name="Jhee E.C."/>
            <person name="Yoo I.D."/>
            <person name="Yi H.K."/>
        </authorList>
    </citation>
    <scope>BIOTECHNOLOGY</scope>
</reference>
<reference key="6">
    <citation type="journal article" date="2009" name="Exp. Dermatol.">
        <title>Long-term suppression of tyrosinase by terrein via tyrosinase degradation and its decreased expression.</title>
        <authorList>
            <person name="Park S.H."/>
            <person name="Kim D.S."/>
            <person name="Lee H.K."/>
            <person name="Kwon S.B."/>
            <person name="Lee S."/>
            <person name="Ryoo I.J."/>
            <person name="Kim W.G."/>
            <person name="Yoo I.D."/>
            <person name="Park K.C."/>
        </authorList>
    </citation>
    <scope>BIOTECHNOLOGY</scope>
</reference>
<reference key="7">
    <citation type="journal article" date="2010" name="Cell Biochem. Funct.">
        <title>Enhancement of osteoblast biocompatibility on titanium surface with Terrein treatment.</title>
        <authorList>
            <person name="Lee Y.H."/>
            <person name="Lee N.H."/>
            <person name="Bhattarai G."/>
            <person name="Oh Y.T."/>
            <person name="Yu M.K."/>
            <person name="Yoo I.D."/>
            <person name="Jhee E.C."/>
            <person name="Yi H.K."/>
        </authorList>
    </citation>
    <scope>BIOTECHNOLOGY</scope>
</reference>
<reference key="8">
    <citation type="journal article" date="2013" name="Oncol. Rep.">
        <title>Terrein induces apoptosis in HeLa human cervical carcinoma cells through p53 and ERK regulation.</title>
        <authorList>
            <person name="Porameesanaporn Y."/>
            <person name="Uthaisang-Tanechpongtamb W."/>
            <person name="Jarintanan F."/>
            <person name="Jongrungruangchok S."/>
            <person name="Thanomsub Wongsatayanon B."/>
        </authorList>
    </citation>
    <scope>BIOTECHNOLOGY</scope>
</reference>
<reference key="9">
    <citation type="journal article" date="2014" name="Chem. Biol.">
        <title>Terrein biosynthesis in Aspergillus terreus and its impact on phytotoxicity.</title>
        <authorList>
            <person name="Zaehle C."/>
            <person name="Gressler M."/>
            <person name="Shelest E."/>
            <person name="Geib E."/>
            <person name="Hertweck C."/>
            <person name="Brock M."/>
        </authorList>
    </citation>
    <scope>FUNCTION</scope>
    <scope>DISRUPTION PHENOTYPE</scope>
</reference>
<reference key="10">
    <citation type="journal article" date="2014" name="Int. J. Mol. Med.">
        <title>The marine-derived fungal metabolite, terrein, inhibits cell proliferation and induces cell cycle arrest in human ovarian cancer cells.</title>
        <authorList>
            <person name="Chen Y.F."/>
            <person name="Wang S.Y."/>
            <person name="Shen H."/>
            <person name="Yao X.F."/>
            <person name="Zhang F.L."/>
            <person name="Lai D."/>
        </authorList>
    </citation>
    <scope>BIOTECHNOLOGY</scope>
</reference>
<reference key="11">
    <citation type="journal article" date="2015" name="Cell Biochem. Funct.">
        <title>Terrein reduces age-related inflammation induced by oxidative stress through Nrf2/ERK1/2/HO-1 signalling in aged HDF cells.</title>
        <authorList>
            <person name="Lee Y.H."/>
            <person name="Lee S.J."/>
            <person name="Jung J.E."/>
            <person name="Kim J.S."/>
            <person name="Lee N.H."/>
            <person name="Yi H.K."/>
        </authorList>
    </citation>
    <scope>BIOTECHNOLOGY</scope>
</reference>
<reference key="12">
    <citation type="journal article" date="2015" name="Elife">
        <title>Phytotoxin production in Aspergillus terreus is regulated by independent environmental signals.</title>
        <authorList>
            <person name="Gressler M."/>
            <person name="Meyer F."/>
            <person name="Heine D."/>
            <person name="Hortschansky P."/>
            <person name="Hertweck C."/>
            <person name="Brock M."/>
        </authorList>
    </citation>
    <scope>FUNCTION</scope>
    <scope>INDUCTION</scope>
</reference>
<reference key="13">
    <citation type="journal article" date="2015" name="Front. Microbiol.">
        <title>A new high-performance heterologous fungal expression system based on regulatory elements from the Aspergillus terreus terrein gene cluster.</title>
        <authorList>
            <person name="Gressler M."/>
            <person name="Hortschansky P."/>
            <person name="Geib E."/>
            <person name="Brock M."/>
        </authorList>
    </citation>
    <scope>FUNCTION</scope>
    <scope>DNA-BINDING</scope>
    <scope>DISRUPTION PHENOTYPE</scope>
</reference>
<reference key="14">
    <citation type="journal article" date="2015" name="Oncol. Rep.">
        <title>(+)-Terrein inhibits human hepatoma Bel-7402 proliferation through cell cycle arrest.</title>
        <authorList>
            <person name="Zhang F."/>
            <person name="Mijiti M."/>
            <person name="Ding W."/>
            <person name="Song J."/>
            <person name="Yin Y."/>
            <person name="Sun W."/>
            <person name="Li Z."/>
        </authorList>
    </citation>
    <scope>BIOTECHNOLOGY</scope>
</reference>
<reference key="15">
    <citation type="journal article" date="2016" name="Anticancer Res.">
        <title>Synthetic terrein inhibits progression of head and neck cancer by suppressing angiogenin production.</title>
        <authorList>
            <person name="Shibata A."/>
            <person name="Ibaragi S."/>
            <person name="Mandai H."/>
            <person name="Tsumura T."/>
            <person name="Kishimoto K."/>
            <person name="Okui T."/>
            <person name="Hassan N.M."/>
            <person name="Shimo T."/>
            <person name="Omori K."/>
            <person name="Hu G.F."/>
            <person name="Takashiba S."/>
            <person name="Suga S."/>
            <person name="Sasaki A."/>
        </authorList>
    </citation>
    <scope>BIOTECHNOLOGY</scope>
</reference>
<name>TERR_ASPTN</name>
<protein>
    <recommendedName>
        <fullName evidence="17">Terrein cluster-specific transcription factor terR</fullName>
    </recommendedName>
</protein>
<dbReference type="EMBL" id="CH476594">
    <property type="protein sequence ID" value="EAU38785.1"/>
    <property type="molecule type" value="Genomic_DNA"/>
</dbReference>
<dbReference type="RefSeq" id="XP_001210225.1">
    <property type="nucleotide sequence ID" value="XM_001210225.1"/>
</dbReference>
<dbReference type="SMR" id="Q0D1P5"/>
<dbReference type="STRING" id="341663.Q0D1P5"/>
<dbReference type="EnsemblFungi" id="EAU38785">
    <property type="protein sequence ID" value="EAU38785"/>
    <property type="gene ID" value="ATEG_00139"/>
</dbReference>
<dbReference type="GeneID" id="4354896"/>
<dbReference type="VEuPathDB" id="FungiDB:ATEG_00139"/>
<dbReference type="eggNOG" id="ENOG502T6II">
    <property type="taxonomic scope" value="Eukaryota"/>
</dbReference>
<dbReference type="HOGENOM" id="CLU_402354_0_0_1"/>
<dbReference type="OMA" id="CKSACFE"/>
<dbReference type="OrthoDB" id="39175at2759"/>
<dbReference type="Proteomes" id="UP000007963">
    <property type="component" value="Unassembled WGS sequence"/>
</dbReference>
<dbReference type="GO" id="GO:0005634">
    <property type="term" value="C:nucleus"/>
    <property type="evidence" value="ECO:0007669"/>
    <property type="project" value="UniProtKB-SubCell"/>
</dbReference>
<dbReference type="GO" id="GO:0003677">
    <property type="term" value="F:DNA binding"/>
    <property type="evidence" value="ECO:0007669"/>
    <property type="project" value="UniProtKB-KW"/>
</dbReference>
<dbReference type="GO" id="GO:0000981">
    <property type="term" value="F:DNA-binding transcription factor activity, RNA polymerase II-specific"/>
    <property type="evidence" value="ECO:0007669"/>
    <property type="project" value="InterPro"/>
</dbReference>
<dbReference type="GO" id="GO:0008270">
    <property type="term" value="F:zinc ion binding"/>
    <property type="evidence" value="ECO:0007669"/>
    <property type="project" value="InterPro"/>
</dbReference>
<dbReference type="GO" id="GO:0009893">
    <property type="term" value="P:positive regulation of metabolic process"/>
    <property type="evidence" value="ECO:0007669"/>
    <property type="project" value="UniProtKB-ARBA"/>
</dbReference>
<dbReference type="CDD" id="cd12148">
    <property type="entry name" value="fungal_TF_MHR"/>
    <property type="match status" value="1"/>
</dbReference>
<dbReference type="CDD" id="cd00067">
    <property type="entry name" value="GAL4"/>
    <property type="match status" value="1"/>
</dbReference>
<dbReference type="Gene3D" id="4.10.240.10">
    <property type="entry name" value="Zn(2)-C6 fungal-type DNA-binding domain"/>
    <property type="match status" value="1"/>
</dbReference>
<dbReference type="InterPro" id="IPR050987">
    <property type="entry name" value="AtrR-like"/>
</dbReference>
<dbReference type="InterPro" id="IPR036864">
    <property type="entry name" value="Zn2-C6_fun-type_DNA-bd_sf"/>
</dbReference>
<dbReference type="InterPro" id="IPR001138">
    <property type="entry name" value="Zn2Cys6_DnaBD"/>
</dbReference>
<dbReference type="PANTHER" id="PTHR46910:SF3">
    <property type="entry name" value="HALOTOLERANCE PROTEIN 9-RELATED"/>
    <property type="match status" value="1"/>
</dbReference>
<dbReference type="PANTHER" id="PTHR46910">
    <property type="entry name" value="TRANSCRIPTION FACTOR PDR1"/>
    <property type="match status" value="1"/>
</dbReference>
<dbReference type="Pfam" id="PF00172">
    <property type="entry name" value="Zn_clus"/>
    <property type="match status" value="1"/>
</dbReference>
<dbReference type="SMART" id="SM00066">
    <property type="entry name" value="GAL4"/>
    <property type="match status" value="1"/>
</dbReference>
<dbReference type="SUPFAM" id="SSF57701">
    <property type="entry name" value="Zn2/Cys6 DNA-binding domain"/>
    <property type="match status" value="1"/>
</dbReference>
<dbReference type="PROSITE" id="PS00463">
    <property type="entry name" value="ZN2_CY6_FUNGAL_1"/>
    <property type="match status" value="1"/>
</dbReference>
<dbReference type="PROSITE" id="PS50048">
    <property type="entry name" value="ZN2_CY6_FUNGAL_2"/>
    <property type="match status" value="1"/>
</dbReference>
<sequence length="638" mass="71533">MFAELNAKDQFNELLKHLSSTSCTTMQADRVETSSSVRKKKWMSRRRGACDMCKSKKVRCDGGTPCSYCNLHDLRCEYQLSKKQQTNKPPVASAAEDVSIVPSYAENNGSGVTTQVPSPSDVQVLPELTANRGSGNAGNILQDMMLATNDRHSMPVMFDGYAHDNFSASPIEWVGSDSLAAPFSVDMGNLNALGTLPWSPPKTAYSEPNLDIPYPIEHTTDVSASLPSISQFELNLPLSPAGPTRDMYDEKMWEEVSPKRQRLGNLSPTQQDEVEAIFRRLSDAQSQMSFGLGGEQYDSHSRWYWSDTALMEKCKSACFEEPLGISTFLTRSHFDDYVQQARESPSIQGLAVRPLIDSVMAFGFHILAARSQPSAGSDVSRKAITRLRMALSSRDAVQRSPDTLLKLQMTISEQIDHKIHTELLSYAVSCARSRRFLHRDSVYMTMTKEKEYLARRSMWYLYSMEVVHSIRDGMPPILTPDWTDYALPEVGKDTDTDWLLIQCQHANALSSAVNALYSPRALCQTVAERERNMMQAHKLLENWRTSLPVHLQNIHRHETGYVALDDQKTRHLTLTMVGKYHEAIFIIFFPWTGSQSKGLISEHYRKRSMELCVKSAQAVLAIAARITSCDILGGSLAS</sequence>
<accession>Q0D1P5</accession>
<evidence type="ECO:0000255" key="1">
    <source>
        <dbReference type="PROSITE-ProRule" id="PRU00227"/>
    </source>
</evidence>
<evidence type="ECO:0000269" key="2">
    <source>
    </source>
</evidence>
<evidence type="ECO:0000269" key="3">
    <source>
    </source>
</evidence>
<evidence type="ECO:0000269" key="4">
    <source>
    </source>
</evidence>
<evidence type="ECO:0000269" key="5">
    <source>
    </source>
</evidence>
<evidence type="ECO:0000269" key="6">
    <source>
    </source>
</evidence>
<evidence type="ECO:0000269" key="7">
    <source>
    </source>
</evidence>
<evidence type="ECO:0000269" key="8">
    <source>
    </source>
</evidence>
<evidence type="ECO:0000269" key="9">
    <source>
    </source>
</evidence>
<evidence type="ECO:0000269" key="10">
    <source>
    </source>
</evidence>
<evidence type="ECO:0000269" key="11">
    <source>
    </source>
</evidence>
<evidence type="ECO:0000269" key="12">
    <source>
    </source>
</evidence>
<evidence type="ECO:0000269" key="13">
    <source>
    </source>
</evidence>
<evidence type="ECO:0000269" key="14">
    <source>
    </source>
</evidence>
<evidence type="ECO:0000269" key="15">
    <source>
    </source>
</evidence>
<evidence type="ECO:0000303" key="16">
    <source>
    </source>
</evidence>
<evidence type="ECO:0000305" key="17"/>
<proteinExistence type="evidence at protein level"/>
<keyword id="KW-0238">DNA-binding</keyword>
<keyword id="KW-0479">Metal-binding</keyword>
<keyword id="KW-0539">Nucleus</keyword>
<keyword id="KW-1185">Reference proteome</keyword>
<keyword id="KW-0804">Transcription</keyword>
<keyword id="KW-0805">Transcription regulation</keyword>
<keyword id="KW-0862">Zinc</keyword>
<gene>
    <name evidence="16" type="primary">terR</name>
    <name type="ORF">ATEG_00139</name>
</gene>
<feature type="chain" id="PRO_0000437608" description="Terrein cluster-specific transcription factor terR">
    <location>
        <begin position="1"/>
        <end position="638"/>
    </location>
</feature>
<feature type="DNA-binding region" description="Zn(2)-C6 fungal-type" evidence="1">
    <location>
        <begin position="50"/>
        <end position="76"/>
    </location>
</feature>
<organism>
    <name type="scientific">Aspergillus terreus (strain NIH 2624 / FGSC A1156)</name>
    <dbReference type="NCBI Taxonomy" id="341663"/>
    <lineage>
        <taxon>Eukaryota</taxon>
        <taxon>Fungi</taxon>
        <taxon>Dikarya</taxon>
        <taxon>Ascomycota</taxon>
        <taxon>Pezizomycotina</taxon>
        <taxon>Eurotiomycetes</taxon>
        <taxon>Eurotiomycetidae</taxon>
        <taxon>Eurotiales</taxon>
        <taxon>Aspergillaceae</taxon>
        <taxon>Aspergillus</taxon>
        <taxon>Aspergillus subgen. Circumdati</taxon>
    </lineage>
</organism>
<comment type="function">
    <text evidence="9 12 13">Transcription factor that regulates specifically the terrein biosynthesis gene cluster (PubMed:24816227, PubMed:25852654, PubMed:26173180). Recognizes CGG direct repeat consensus sequences in the terrein cluster forming the high affinity consensus motif TCGGHHWYHCGGH (PubMed:25852654).</text>
</comment>
<comment type="subcellular location">
    <subcellularLocation>
        <location evidence="1">Nucleus</location>
    </subcellularLocation>
</comment>
<comment type="induction">
    <text evidence="13">Expression is induced by methionine (PubMed:26173180). Nitrogen starvation induces expression of terR and promotes terrein production during fruit infection, via regulation by areA and atfA (PubMed:26173180). Iron limitation acts as a third independent signal for terrein cluster induction via the iron response regulator hapX (PubMed:26173180).</text>
</comment>
<comment type="disruption phenotype">
    <text evidence="9 12">Impairs the expression of the terrein gene cluster and subsequent production of terrein (PubMed:24816227, PubMed:25852654).</text>
</comment>
<comment type="biotechnology">
    <text evidence="2 3 4 5 6 7 8 10 11 14 15">Terrein shows anticancer activity on various tumors including cervical carcinoma, ovarian cancer, and head and neck cancer (PubMed:23417151, PubMed:25318762, PubMed:25592371, PubMed:27127118). The secondary metabolite acts as angiogenesis inhibitors through the inhibition of angiogenin secretion (PubMed:18776656, PubMed:27127118). Terrein also has anti-inflammatory activity (PubMed:18358890). It shows an alleviative function of age-related inflammation characterized as an anti-oxidant and might therefore be a useful nutraceutical compound for anti-aging (PubMed:26416516). Terrein may enhance osseointegration by decreasing the level of ROS and has a potentially synergistic effect on osteoblast differentiation (PubMed:21104936). Terrein has also been shown to act as a melanogenesis inhibitor (PubMed:15558216, PubMed:15603975, PubMed:19493001).</text>
</comment>